<gene>
    <name evidence="1" type="primary">rpsD</name>
    <name type="ordered locus">Lreu_0500</name>
</gene>
<comment type="function">
    <text evidence="1">One of the primary rRNA binding proteins, it binds directly to 16S rRNA where it nucleates assembly of the body of the 30S subunit.</text>
</comment>
<comment type="function">
    <text evidence="1">With S5 and S12 plays an important role in translational accuracy.</text>
</comment>
<comment type="subunit">
    <text evidence="1">Part of the 30S ribosomal subunit. Contacts protein S5. The interaction surface between S4 and S5 is involved in control of translational fidelity.</text>
</comment>
<comment type="similarity">
    <text evidence="1">Belongs to the universal ribosomal protein uS4 family.</text>
</comment>
<keyword id="KW-1185">Reference proteome</keyword>
<keyword id="KW-0687">Ribonucleoprotein</keyword>
<keyword id="KW-0689">Ribosomal protein</keyword>
<keyword id="KW-0694">RNA-binding</keyword>
<keyword id="KW-0699">rRNA-binding</keyword>
<evidence type="ECO:0000255" key="1">
    <source>
        <dbReference type="HAMAP-Rule" id="MF_01306"/>
    </source>
</evidence>
<evidence type="ECO:0000256" key="2">
    <source>
        <dbReference type="SAM" id="MobiDB-lite"/>
    </source>
</evidence>
<evidence type="ECO:0000305" key="3"/>
<sequence>MSRYTGPSWRVSRRLGVSLSGTGKELARRAYAPGDHGRDRRGKLSEYGTQLREKQKLRFMYGMTERQFSNLFVRAGKIKEGTHGANFMALLERRLDNMVYRLGLATTRRQARQLVNHGHITVDGKRVDIPSYEVKVGQIIAVRDKSKNLDIIKNAVEAVVSRPSYVDFDADKLEGKLNRIPAREDMNADIDEALIVEFYNK</sequence>
<accession>A5VIU4</accession>
<reference key="1">
    <citation type="journal article" date="2011" name="PLoS Genet.">
        <title>The evolution of host specialization in the vertebrate gut symbiont Lactobacillus reuteri.</title>
        <authorList>
            <person name="Frese S.A."/>
            <person name="Benson A.K."/>
            <person name="Tannock G.W."/>
            <person name="Loach D.M."/>
            <person name="Kim J."/>
            <person name="Zhang M."/>
            <person name="Oh P.L."/>
            <person name="Heng N.C."/>
            <person name="Patil P.B."/>
            <person name="Juge N."/>
            <person name="Mackenzie D.A."/>
            <person name="Pearson B.M."/>
            <person name="Lapidus A."/>
            <person name="Dalin E."/>
            <person name="Tice H."/>
            <person name="Goltsman E."/>
            <person name="Land M."/>
            <person name="Hauser L."/>
            <person name="Ivanova N."/>
            <person name="Kyrpides N.C."/>
            <person name="Walter J."/>
        </authorList>
    </citation>
    <scope>NUCLEOTIDE SEQUENCE [LARGE SCALE GENOMIC DNA]</scope>
    <source>
        <strain>DSM 20016</strain>
    </source>
</reference>
<dbReference type="EMBL" id="CP000705">
    <property type="protein sequence ID" value="ABQ82768.1"/>
    <property type="molecule type" value="Genomic_DNA"/>
</dbReference>
<dbReference type="RefSeq" id="WP_003666632.1">
    <property type="nucleotide sequence ID" value="NZ_AZDD01000007.1"/>
</dbReference>
<dbReference type="SMR" id="A5VIU4"/>
<dbReference type="STRING" id="557436.Lreu_0500"/>
<dbReference type="GeneID" id="77192042"/>
<dbReference type="KEGG" id="lre:Lreu_0500"/>
<dbReference type="PATRIC" id="fig|557436.17.peg.1780"/>
<dbReference type="eggNOG" id="COG0522">
    <property type="taxonomic scope" value="Bacteria"/>
</dbReference>
<dbReference type="HOGENOM" id="CLU_092403_0_1_9"/>
<dbReference type="Proteomes" id="UP000001991">
    <property type="component" value="Chromosome"/>
</dbReference>
<dbReference type="GO" id="GO:0015935">
    <property type="term" value="C:small ribosomal subunit"/>
    <property type="evidence" value="ECO:0007669"/>
    <property type="project" value="InterPro"/>
</dbReference>
<dbReference type="GO" id="GO:0019843">
    <property type="term" value="F:rRNA binding"/>
    <property type="evidence" value="ECO:0007669"/>
    <property type="project" value="UniProtKB-UniRule"/>
</dbReference>
<dbReference type="GO" id="GO:0003735">
    <property type="term" value="F:structural constituent of ribosome"/>
    <property type="evidence" value="ECO:0007669"/>
    <property type="project" value="InterPro"/>
</dbReference>
<dbReference type="GO" id="GO:0042274">
    <property type="term" value="P:ribosomal small subunit biogenesis"/>
    <property type="evidence" value="ECO:0007669"/>
    <property type="project" value="TreeGrafter"/>
</dbReference>
<dbReference type="GO" id="GO:0006412">
    <property type="term" value="P:translation"/>
    <property type="evidence" value="ECO:0007669"/>
    <property type="project" value="UniProtKB-UniRule"/>
</dbReference>
<dbReference type="CDD" id="cd00165">
    <property type="entry name" value="S4"/>
    <property type="match status" value="1"/>
</dbReference>
<dbReference type="FunFam" id="3.10.290.10:FF:000001">
    <property type="entry name" value="30S ribosomal protein S4"/>
    <property type="match status" value="1"/>
</dbReference>
<dbReference type="Gene3D" id="1.10.1050.10">
    <property type="entry name" value="Ribosomal Protein S4 Delta 41, Chain A, domain 1"/>
    <property type="match status" value="1"/>
</dbReference>
<dbReference type="Gene3D" id="3.10.290.10">
    <property type="entry name" value="RNA-binding S4 domain"/>
    <property type="match status" value="1"/>
</dbReference>
<dbReference type="HAMAP" id="MF_01306_B">
    <property type="entry name" value="Ribosomal_uS4_B"/>
    <property type="match status" value="1"/>
</dbReference>
<dbReference type="InterPro" id="IPR022801">
    <property type="entry name" value="Ribosomal_uS4"/>
</dbReference>
<dbReference type="InterPro" id="IPR005709">
    <property type="entry name" value="Ribosomal_uS4_bac-type"/>
</dbReference>
<dbReference type="InterPro" id="IPR018079">
    <property type="entry name" value="Ribosomal_uS4_CS"/>
</dbReference>
<dbReference type="InterPro" id="IPR001912">
    <property type="entry name" value="Ribosomal_uS4_N"/>
</dbReference>
<dbReference type="InterPro" id="IPR002942">
    <property type="entry name" value="S4_RNA-bd"/>
</dbReference>
<dbReference type="InterPro" id="IPR036986">
    <property type="entry name" value="S4_RNA-bd_sf"/>
</dbReference>
<dbReference type="NCBIfam" id="NF003717">
    <property type="entry name" value="PRK05327.1"/>
    <property type="match status" value="1"/>
</dbReference>
<dbReference type="NCBIfam" id="TIGR01017">
    <property type="entry name" value="rpsD_bact"/>
    <property type="match status" value="1"/>
</dbReference>
<dbReference type="PANTHER" id="PTHR11831">
    <property type="entry name" value="30S 40S RIBOSOMAL PROTEIN"/>
    <property type="match status" value="1"/>
</dbReference>
<dbReference type="PANTHER" id="PTHR11831:SF4">
    <property type="entry name" value="SMALL RIBOSOMAL SUBUNIT PROTEIN US4M"/>
    <property type="match status" value="1"/>
</dbReference>
<dbReference type="Pfam" id="PF00163">
    <property type="entry name" value="Ribosomal_S4"/>
    <property type="match status" value="1"/>
</dbReference>
<dbReference type="Pfam" id="PF01479">
    <property type="entry name" value="S4"/>
    <property type="match status" value="1"/>
</dbReference>
<dbReference type="SMART" id="SM01390">
    <property type="entry name" value="Ribosomal_S4"/>
    <property type="match status" value="1"/>
</dbReference>
<dbReference type="SMART" id="SM00363">
    <property type="entry name" value="S4"/>
    <property type="match status" value="1"/>
</dbReference>
<dbReference type="SUPFAM" id="SSF55174">
    <property type="entry name" value="Alpha-L RNA-binding motif"/>
    <property type="match status" value="1"/>
</dbReference>
<dbReference type="PROSITE" id="PS00632">
    <property type="entry name" value="RIBOSOMAL_S4"/>
    <property type="match status" value="1"/>
</dbReference>
<dbReference type="PROSITE" id="PS50889">
    <property type="entry name" value="S4"/>
    <property type="match status" value="1"/>
</dbReference>
<name>RS4_LIMRD</name>
<organism>
    <name type="scientific">Limosilactobacillus reuteri (strain DSM 20016)</name>
    <name type="common">Lactobacillus reuteri</name>
    <dbReference type="NCBI Taxonomy" id="557436"/>
    <lineage>
        <taxon>Bacteria</taxon>
        <taxon>Bacillati</taxon>
        <taxon>Bacillota</taxon>
        <taxon>Bacilli</taxon>
        <taxon>Lactobacillales</taxon>
        <taxon>Lactobacillaceae</taxon>
        <taxon>Limosilactobacillus</taxon>
    </lineage>
</organism>
<proteinExistence type="inferred from homology"/>
<protein>
    <recommendedName>
        <fullName evidence="1">Small ribosomal subunit protein uS4</fullName>
    </recommendedName>
    <alternativeName>
        <fullName evidence="3">30S ribosomal protein S4</fullName>
    </alternativeName>
</protein>
<feature type="chain" id="PRO_0000322309" description="Small ribosomal subunit protein uS4">
    <location>
        <begin position="1"/>
        <end position="201"/>
    </location>
</feature>
<feature type="domain" description="S4 RNA-binding" evidence="1">
    <location>
        <begin position="93"/>
        <end position="156"/>
    </location>
</feature>
<feature type="region of interest" description="Disordered" evidence="2">
    <location>
        <begin position="26"/>
        <end position="46"/>
    </location>
</feature>
<feature type="compositionally biased region" description="Basic and acidic residues" evidence="2">
    <location>
        <begin position="35"/>
        <end position="44"/>
    </location>
</feature>